<feature type="chain" id="PRO_0000054299" description="Glycogen debranching enzyme">
    <location>
        <begin position="1"/>
        <end position="657"/>
    </location>
</feature>
<feature type="region of interest" description="Disordered" evidence="2">
    <location>
        <begin position="460"/>
        <end position="481"/>
    </location>
</feature>
<feature type="active site" description="Nucleophile" evidence="1">
    <location>
        <position position="336"/>
    </location>
</feature>
<feature type="active site" description="Proton donor" evidence="1">
    <location>
        <position position="371"/>
    </location>
</feature>
<feature type="site" description="Transition state stabilizer" evidence="1">
    <location>
        <position position="443"/>
    </location>
</feature>
<proteinExistence type="inferred from homology"/>
<evidence type="ECO:0000255" key="1">
    <source>
        <dbReference type="HAMAP-Rule" id="MF_01248"/>
    </source>
</evidence>
<evidence type="ECO:0000256" key="2">
    <source>
        <dbReference type="SAM" id="MobiDB-lite"/>
    </source>
</evidence>
<name>GLGX_ECO57</name>
<sequence>MTQLAIGKPAPLGAHYDGQGVNFTLFSAHAERVELCVFDANGQEHRYDLPGHSGDIWHGYLPDARPGLRYGYRVHGPWQPAEGHRFNPAKLLIDPCARQIDGEFKDNPLLHAGHNEPDYRDNAAIAPKCVVVVDHYDWEDDAPPRTPWGSTIIYEAHVKGLTYLHPEIPVEIRGTYKALGHPVMINYLKQLGITALELLPVAQFASEPRLQRMGLSNYWGYNPVAMFALHPAYACSPETALHEFRDAIKALHKAGIEVILDIVLNHSAELDLDGPLFSLRGIDNRSYYWIREDGDYHNWTGCGNTLNLSHPAVVDYASACLRYWVETCHVDGFRFDLAAVMGRTPEFRQDAPLFTAIQNCPVLSQVKLIAEPWDIAPGGYQVGNFPPLFAEWNDHFRDAARRFWLHYDLPLGAFAGRFAASSDVFKRNGRLPSAAINLVTAHDGFTLRDCVCFNHKHNEANGEENRDGTNNNYSNNHGKEGVGGTLDLVERRRDSIHALLTTLLLSQGTPMLLAGDEHGHSQHGNNNAYCQDNQLTWLDWSQASSGLTAFTAALIHLRKRIPALVENRWWEEGDGNVRWLNRYAQPLSTDEWQNGPKQLQILLSDRFLIAINATLEVTEIVLPAGEWHAIPPFAGEDNPVITAVWQGPAHGLCVFQR</sequence>
<keyword id="KW-0119">Carbohydrate metabolism</keyword>
<keyword id="KW-0321">Glycogen metabolism</keyword>
<keyword id="KW-0326">Glycosidase</keyword>
<keyword id="KW-0378">Hydrolase</keyword>
<keyword id="KW-1185">Reference proteome</keyword>
<organism>
    <name type="scientific">Escherichia coli O157:H7</name>
    <dbReference type="NCBI Taxonomy" id="83334"/>
    <lineage>
        <taxon>Bacteria</taxon>
        <taxon>Pseudomonadati</taxon>
        <taxon>Pseudomonadota</taxon>
        <taxon>Gammaproteobacteria</taxon>
        <taxon>Enterobacterales</taxon>
        <taxon>Enterobacteriaceae</taxon>
        <taxon>Escherichia</taxon>
    </lineage>
</organism>
<gene>
    <name evidence="1" type="primary">glgX</name>
    <name type="ordered locus">Z4794</name>
    <name type="ordered locus">ECs4276</name>
</gene>
<dbReference type="EC" id="3.2.1.196" evidence="1"/>
<dbReference type="EMBL" id="AE005174">
    <property type="protein sequence ID" value="AAG58537.1"/>
    <property type="molecule type" value="Genomic_DNA"/>
</dbReference>
<dbReference type="EMBL" id="BA000007">
    <property type="protein sequence ID" value="BAB37699.1"/>
    <property type="molecule type" value="Genomic_DNA"/>
</dbReference>
<dbReference type="PIR" id="D91163">
    <property type="entry name" value="D91163"/>
</dbReference>
<dbReference type="PIR" id="E86009">
    <property type="entry name" value="E86009"/>
</dbReference>
<dbReference type="RefSeq" id="NP_312303.1">
    <property type="nucleotide sequence ID" value="NC_002695.1"/>
</dbReference>
<dbReference type="RefSeq" id="WP_000192540.1">
    <property type="nucleotide sequence ID" value="NZ_VOAI01000004.1"/>
</dbReference>
<dbReference type="SMR" id="Q8X6X8"/>
<dbReference type="STRING" id="155864.Z4794"/>
<dbReference type="CAZy" id="CBM48">
    <property type="family name" value="Carbohydrate-Binding Module Family 48"/>
</dbReference>
<dbReference type="CAZy" id="GH13">
    <property type="family name" value="Glycoside Hydrolase Family 13"/>
</dbReference>
<dbReference type="GeneID" id="915870"/>
<dbReference type="KEGG" id="ece:Z4794"/>
<dbReference type="KEGG" id="ecs:ECs_4276"/>
<dbReference type="PATRIC" id="fig|386585.9.peg.4467"/>
<dbReference type="eggNOG" id="COG1523">
    <property type="taxonomic scope" value="Bacteria"/>
</dbReference>
<dbReference type="HOGENOM" id="CLU_011725_1_1_6"/>
<dbReference type="OMA" id="INHFQWG"/>
<dbReference type="UniPathway" id="UPA00165"/>
<dbReference type="Proteomes" id="UP000000558">
    <property type="component" value="Chromosome"/>
</dbReference>
<dbReference type="Proteomes" id="UP000002519">
    <property type="component" value="Chromosome"/>
</dbReference>
<dbReference type="GO" id="GO:0004133">
    <property type="term" value="F:glycogen debranching enzyme activity"/>
    <property type="evidence" value="ECO:0007669"/>
    <property type="project" value="UniProtKB-UniRule"/>
</dbReference>
<dbReference type="GO" id="GO:0004553">
    <property type="term" value="F:hydrolase activity, hydrolyzing O-glycosyl compounds"/>
    <property type="evidence" value="ECO:0007669"/>
    <property type="project" value="InterPro"/>
</dbReference>
<dbReference type="GO" id="GO:0005980">
    <property type="term" value="P:glycogen catabolic process"/>
    <property type="evidence" value="ECO:0007669"/>
    <property type="project" value="UniProtKB-UniRule"/>
</dbReference>
<dbReference type="CDD" id="cd11326">
    <property type="entry name" value="AmyAc_Glg_debranch"/>
    <property type="match status" value="1"/>
</dbReference>
<dbReference type="CDD" id="cd02856">
    <property type="entry name" value="E_set_GDE_Isoamylase_N"/>
    <property type="match status" value="1"/>
</dbReference>
<dbReference type="FunFam" id="2.60.40.10:FF:000468">
    <property type="entry name" value="Glycogen debranching enzyme"/>
    <property type="match status" value="1"/>
</dbReference>
<dbReference type="FunFam" id="3.20.20.80:FF:000031">
    <property type="entry name" value="Glycogen debranching enzyme"/>
    <property type="match status" value="1"/>
</dbReference>
<dbReference type="Gene3D" id="3.20.20.80">
    <property type="entry name" value="Glycosidases"/>
    <property type="match status" value="1"/>
</dbReference>
<dbReference type="Gene3D" id="2.60.40.1180">
    <property type="entry name" value="Golgi alpha-mannosidase II"/>
    <property type="match status" value="1"/>
</dbReference>
<dbReference type="Gene3D" id="2.60.40.10">
    <property type="entry name" value="Immunoglobulins"/>
    <property type="match status" value="1"/>
</dbReference>
<dbReference type="HAMAP" id="MF_01248">
    <property type="entry name" value="GlgX"/>
    <property type="match status" value="1"/>
</dbReference>
<dbReference type="InterPro" id="IPR040784">
    <property type="entry name" value="GlgX_C"/>
</dbReference>
<dbReference type="InterPro" id="IPR044505">
    <property type="entry name" value="GlgX_Isoamylase_N_E_set"/>
</dbReference>
<dbReference type="InterPro" id="IPR006047">
    <property type="entry name" value="Glyco_hydro_13_cat_dom"/>
</dbReference>
<dbReference type="InterPro" id="IPR004193">
    <property type="entry name" value="Glyco_hydro_13_N"/>
</dbReference>
<dbReference type="InterPro" id="IPR013780">
    <property type="entry name" value="Glyco_hydro_b"/>
</dbReference>
<dbReference type="InterPro" id="IPR022844">
    <property type="entry name" value="Glycogen_debranch_bac"/>
</dbReference>
<dbReference type="InterPro" id="IPR011837">
    <property type="entry name" value="Glycogen_debranch_GlgX"/>
</dbReference>
<dbReference type="InterPro" id="IPR017853">
    <property type="entry name" value="Glycoside_hydrolase_SF"/>
</dbReference>
<dbReference type="InterPro" id="IPR013783">
    <property type="entry name" value="Ig-like_fold"/>
</dbReference>
<dbReference type="InterPro" id="IPR014756">
    <property type="entry name" value="Ig_E-set"/>
</dbReference>
<dbReference type="NCBIfam" id="TIGR02100">
    <property type="entry name" value="glgX_debranch"/>
    <property type="match status" value="1"/>
</dbReference>
<dbReference type="NCBIfam" id="NF002983">
    <property type="entry name" value="PRK03705.1"/>
    <property type="match status" value="1"/>
</dbReference>
<dbReference type="PANTHER" id="PTHR43002">
    <property type="entry name" value="GLYCOGEN DEBRANCHING ENZYME"/>
    <property type="match status" value="1"/>
</dbReference>
<dbReference type="Pfam" id="PF00128">
    <property type="entry name" value="Alpha-amylase"/>
    <property type="match status" value="1"/>
</dbReference>
<dbReference type="Pfam" id="PF02922">
    <property type="entry name" value="CBM_48"/>
    <property type="match status" value="1"/>
</dbReference>
<dbReference type="Pfam" id="PF18390">
    <property type="entry name" value="GlgX_C"/>
    <property type="match status" value="1"/>
</dbReference>
<dbReference type="SMART" id="SM00642">
    <property type="entry name" value="Aamy"/>
    <property type="match status" value="1"/>
</dbReference>
<dbReference type="SUPFAM" id="SSF51445">
    <property type="entry name" value="(Trans)glycosidases"/>
    <property type="match status" value="1"/>
</dbReference>
<dbReference type="SUPFAM" id="SSF81296">
    <property type="entry name" value="E set domains"/>
    <property type="match status" value="1"/>
</dbReference>
<protein>
    <recommendedName>
        <fullName evidence="1">Glycogen debranching enzyme</fullName>
        <ecNumber evidence="1">3.2.1.196</ecNumber>
    </recommendedName>
    <alternativeName>
        <fullName evidence="1">Limit dextrin alpha-1,6-maltotetraose-hydrolase</fullName>
    </alternativeName>
</protein>
<comment type="function">
    <text evidence="1">Removes maltotriose and maltotetraose chains that are attached by 1,6-alpha-linkage to the limit dextrin main chain, generating a debranched limit dextrin.</text>
</comment>
<comment type="catalytic activity">
    <reaction evidence="1">
        <text>Hydrolysis of (1-&gt;6)-alpha-D-glucosidic linkages to branches with degrees of polymerization of three or four glucose residues in limit dextrin.</text>
        <dbReference type="EC" id="3.2.1.196"/>
    </reaction>
</comment>
<comment type="pathway">
    <text evidence="1">Glycan degradation; glycogen degradation.</text>
</comment>
<comment type="similarity">
    <text evidence="1">Belongs to the glycosyl hydrolase 13 family.</text>
</comment>
<reference key="1">
    <citation type="journal article" date="2001" name="Nature">
        <title>Genome sequence of enterohaemorrhagic Escherichia coli O157:H7.</title>
        <authorList>
            <person name="Perna N.T."/>
            <person name="Plunkett G. III"/>
            <person name="Burland V."/>
            <person name="Mau B."/>
            <person name="Glasner J.D."/>
            <person name="Rose D.J."/>
            <person name="Mayhew G.F."/>
            <person name="Evans P.S."/>
            <person name="Gregor J."/>
            <person name="Kirkpatrick H.A."/>
            <person name="Posfai G."/>
            <person name="Hackett J."/>
            <person name="Klink S."/>
            <person name="Boutin A."/>
            <person name="Shao Y."/>
            <person name="Miller L."/>
            <person name="Grotbeck E.J."/>
            <person name="Davis N.W."/>
            <person name="Lim A."/>
            <person name="Dimalanta E.T."/>
            <person name="Potamousis K."/>
            <person name="Apodaca J."/>
            <person name="Anantharaman T.S."/>
            <person name="Lin J."/>
            <person name="Yen G."/>
            <person name="Schwartz D.C."/>
            <person name="Welch R.A."/>
            <person name="Blattner F.R."/>
        </authorList>
    </citation>
    <scope>NUCLEOTIDE SEQUENCE [LARGE SCALE GENOMIC DNA]</scope>
    <source>
        <strain>O157:H7 / EDL933 / ATCC 700927 / EHEC</strain>
    </source>
</reference>
<reference key="2">
    <citation type="journal article" date="2001" name="DNA Res.">
        <title>Complete genome sequence of enterohemorrhagic Escherichia coli O157:H7 and genomic comparison with a laboratory strain K-12.</title>
        <authorList>
            <person name="Hayashi T."/>
            <person name="Makino K."/>
            <person name="Ohnishi M."/>
            <person name="Kurokawa K."/>
            <person name="Ishii K."/>
            <person name="Yokoyama K."/>
            <person name="Han C.-G."/>
            <person name="Ohtsubo E."/>
            <person name="Nakayama K."/>
            <person name="Murata T."/>
            <person name="Tanaka M."/>
            <person name="Tobe T."/>
            <person name="Iida T."/>
            <person name="Takami H."/>
            <person name="Honda T."/>
            <person name="Sasakawa C."/>
            <person name="Ogasawara N."/>
            <person name="Yasunaga T."/>
            <person name="Kuhara S."/>
            <person name="Shiba T."/>
            <person name="Hattori M."/>
            <person name="Shinagawa H."/>
        </authorList>
    </citation>
    <scope>NUCLEOTIDE SEQUENCE [LARGE SCALE GENOMIC DNA]</scope>
    <source>
        <strain>O157:H7 / Sakai / RIMD 0509952 / EHEC</strain>
    </source>
</reference>
<accession>Q8X6X8</accession>